<dbReference type="EMBL" id="AACD01000017">
    <property type="protein sequence ID" value="EAA65879.1"/>
    <property type="status" value="ALT_SEQ"/>
    <property type="molecule type" value="Genomic_DNA"/>
</dbReference>
<dbReference type="EMBL" id="BN001308">
    <property type="protein sequence ID" value="CBF87791.1"/>
    <property type="status" value="ALT_SEQ"/>
    <property type="molecule type" value="Genomic_DNA"/>
</dbReference>
<dbReference type="RefSeq" id="XP_658890.1">
    <property type="nucleotide sequence ID" value="XM_653798.1"/>
</dbReference>
<dbReference type="SMR" id="Q5BDU4"/>
<dbReference type="FunCoup" id="Q5BDU4">
    <property type="interactions" value="163"/>
</dbReference>
<dbReference type="STRING" id="227321.Q5BDU4"/>
<dbReference type="eggNOG" id="KOG0973">
    <property type="taxonomic scope" value="Eukaryota"/>
</dbReference>
<dbReference type="HOGENOM" id="CLU_004372_3_1_1"/>
<dbReference type="InParanoid" id="Q5BDU4"/>
<dbReference type="Proteomes" id="UP000000560">
    <property type="component" value="Chromosome VIII"/>
</dbReference>
<dbReference type="GO" id="GO:0000785">
    <property type="term" value="C:chromatin"/>
    <property type="evidence" value="ECO:0000318"/>
    <property type="project" value="GO_Central"/>
</dbReference>
<dbReference type="GO" id="GO:0000417">
    <property type="term" value="C:HIR complex"/>
    <property type="evidence" value="ECO:0000318"/>
    <property type="project" value="GO_Central"/>
</dbReference>
<dbReference type="GO" id="GO:0005634">
    <property type="term" value="C:nucleus"/>
    <property type="evidence" value="ECO:0007669"/>
    <property type="project" value="UniProtKB-SubCell"/>
</dbReference>
<dbReference type="GO" id="GO:0006338">
    <property type="term" value="P:chromatin remodeling"/>
    <property type="evidence" value="ECO:0000318"/>
    <property type="project" value="GO_Central"/>
</dbReference>
<dbReference type="GO" id="GO:0006351">
    <property type="term" value="P:DNA-templated transcription"/>
    <property type="evidence" value="ECO:0007669"/>
    <property type="project" value="InterPro"/>
</dbReference>
<dbReference type="GO" id="GO:0006355">
    <property type="term" value="P:regulation of DNA-templated transcription"/>
    <property type="evidence" value="ECO:0007669"/>
    <property type="project" value="InterPro"/>
</dbReference>
<dbReference type="CDD" id="cd00200">
    <property type="entry name" value="WD40"/>
    <property type="match status" value="1"/>
</dbReference>
<dbReference type="FunFam" id="2.130.10.10:FF:000290">
    <property type="entry name" value="Protein HIR"/>
    <property type="match status" value="1"/>
</dbReference>
<dbReference type="FunFam" id="2.130.10.10:FF:001557">
    <property type="entry name" value="Protein HIR"/>
    <property type="match status" value="1"/>
</dbReference>
<dbReference type="Gene3D" id="2.130.10.10">
    <property type="entry name" value="YVTN repeat-like/Quinoprotein amine dehydrogenase"/>
    <property type="match status" value="2"/>
</dbReference>
<dbReference type="InterPro" id="IPR055410">
    <property type="entry name" value="CAF1B_HIR1_beta-prop"/>
</dbReference>
<dbReference type="InterPro" id="IPR031120">
    <property type="entry name" value="HIR1-like"/>
</dbReference>
<dbReference type="InterPro" id="IPR011494">
    <property type="entry name" value="HIRA-like_C"/>
</dbReference>
<dbReference type="InterPro" id="IPR019015">
    <property type="entry name" value="HIRA_B_motif"/>
</dbReference>
<dbReference type="InterPro" id="IPR015943">
    <property type="entry name" value="WD40/YVTN_repeat-like_dom_sf"/>
</dbReference>
<dbReference type="InterPro" id="IPR036322">
    <property type="entry name" value="WD40_repeat_dom_sf"/>
</dbReference>
<dbReference type="InterPro" id="IPR001680">
    <property type="entry name" value="WD40_rpt"/>
</dbReference>
<dbReference type="PANTHER" id="PTHR13831">
    <property type="entry name" value="MEMBER OF THE HIR1 FAMILY OF WD-REPEAT PROTEINS"/>
    <property type="match status" value="1"/>
</dbReference>
<dbReference type="PANTHER" id="PTHR13831:SF0">
    <property type="entry name" value="PROTEIN HIRA"/>
    <property type="match status" value="1"/>
</dbReference>
<dbReference type="Pfam" id="PF24105">
    <property type="entry name" value="Beta-prop_CAF1B_HIR1"/>
    <property type="match status" value="1"/>
</dbReference>
<dbReference type="Pfam" id="PF07569">
    <property type="entry name" value="Hira"/>
    <property type="match status" value="1"/>
</dbReference>
<dbReference type="Pfam" id="PF09453">
    <property type="entry name" value="HIRA_B"/>
    <property type="match status" value="1"/>
</dbReference>
<dbReference type="SMART" id="SM00320">
    <property type="entry name" value="WD40"/>
    <property type="match status" value="6"/>
</dbReference>
<dbReference type="SUPFAM" id="SSF50978">
    <property type="entry name" value="WD40 repeat-like"/>
    <property type="match status" value="2"/>
</dbReference>
<dbReference type="PROSITE" id="PS50082">
    <property type="entry name" value="WD_REPEATS_2"/>
    <property type="match status" value="4"/>
</dbReference>
<dbReference type="PROSITE" id="PS50294">
    <property type="entry name" value="WD_REPEATS_REGION"/>
    <property type="match status" value="1"/>
</dbReference>
<organism>
    <name type="scientific">Emericella nidulans (strain FGSC A4 / ATCC 38163 / CBS 112.46 / NRRL 194 / M139)</name>
    <name type="common">Aspergillus nidulans</name>
    <dbReference type="NCBI Taxonomy" id="227321"/>
    <lineage>
        <taxon>Eukaryota</taxon>
        <taxon>Fungi</taxon>
        <taxon>Dikarya</taxon>
        <taxon>Ascomycota</taxon>
        <taxon>Pezizomycotina</taxon>
        <taxon>Eurotiomycetes</taxon>
        <taxon>Eurotiomycetidae</taxon>
        <taxon>Eurotiales</taxon>
        <taxon>Aspergillaceae</taxon>
        <taxon>Aspergillus</taxon>
        <taxon>Aspergillus subgen. Nidulantes</taxon>
    </lineage>
</organism>
<feature type="chain" id="PRO_0000286411" description="Protein hir1">
    <location>
        <begin position="1"/>
        <end position="1031"/>
    </location>
</feature>
<feature type="repeat" description="WD 1">
    <location>
        <begin position="36"/>
        <end position="75"/>
    </location>
</feature>
<feature type="repeat" description="WD 2">
    <location>
        <begin position="87"/>
        <end position="126"/>
    </location>
</feature>
<feature type="repeat" description="WD 3">
    <location>
        <begin position="148"/>
        <end position="187"/>
    </location>
</feature>
<feature type="repeat" description="WD 4">
    <location>
        <begin position="190"/>
        <end position="229"/>
    </location>
</feature>
<feature type="repeat" description="WD 5">
    <location>
        <begin position="251"/>
        <end position="294"/>
    </location>
</feature>
<feature type="repeat" description="WD 6">
    <location>
        <begin position="297"/>
        <end position="358"/>
    </location>
</feature>
<feature type="repeat" description="WD 7">
    <location>
        <begin position="362"/>
        <end position="403"/>
    </location>
</feature>
<feature type="region of interest" description="Disordered" evidence="2">
    <location>
        <begin position="449"/>
        <end position="529"/>
    </location>
</feature>
<feature type="region of interest" description="Disordered" evidence="2">
    <location>
        <begin position="618"/>
        <end position="643"/>
    </location>
</feature>
<feature type="region of interest" description="Disordered" evidence="2">
    <location>
        <begin position="675"/>
        <end position="695"/>
    </location>
</feature>
<feature type="compositionally biased region" description="Polar residues" evidence="2">
    <location>
        <begin position="471"/>
        <end position="502"/>
    </location>
</feature>
<feature type="compositionally biased region" description="Basic and acidic residues" evidence="2">
    <location>
        <begin position="503"/>
        <end position="526"/>
    </location>
</feature>
<reference key="1">
    <citation type="journal article" date="2005" name="Nature">
        <title>Sequencing of Aspergillus nidulans and comparative analysis with A. fumigatus and A. oryzae.</title>
        <authorList>
            <person name="Galagan J.E."/>
            <person name="Calvo S.E."/>
            <person name="Cuomo C."/>
            <person name="Ma L.-J."/>
            <person name="Wortman J.R."/>
            <person name="Batzoglou S."/>
            <person name="Lee S.-I."/>
            <person name="Bastuerkmen M."/>
            <person name="Spevak C.C."/>
            <person name="Clutterbuck J."/>
            <person name="Kapitonov V."/>
            <person name="Jurka J."/>
            <person name="Scazzocchio C."/>
            <person name="Farman M.L."/>
            <person name="Butler J."/>
            <person name="Purcell S."/>
            <person name="Harris S."/>
            <person name="Braus G.H."/>
            <person name="Draht O."/>
            <person name="Busch S."/>
            <person name="D'Enfert C."/>
            <person name="Bouchier C."/>
            <person name="Goldman G.H."/>
            <person name="Bell-Pedersen D."/>
            <person name="Griffiths-Jones S."/>
            <person name="Doonan J.H."/>
            <person name="Yu J."/>
            <person name="Vienken K."/>
            <person name="Pain A."/>
            <person name="Freitag M."/>
            <person name="Selker E.U."/>
            <person name="Archer D.B."/>
            <person name="Penalva M.A."/>
            <person name="Oakley B.R."/>
            <person name="Momany M."/>
            <person name="Tanaka T."/>
            <person name="Kumagai T."/>
            <person name="Asai K."/>
            <person name="Machida M."/>
            <person name="Nierman W.C."/>
            <person name="Denning D.W."/>
            <person name="Caddick M.X."/>
            <person name="Hynes M."/>
            <person name="Paoletti M."/>
            <person name="Fischer R."/>
            <person name="Miller B.L."/>
            <person name="Dyer P.S."/>
            <person name="Sachs M.S."/>
            <person name="Osmani S.A."/>
            <person name="Birren B.W."/>
        </authorList>
    </citation>
    <scope>NUCLEOTIDE SEQUENCE [LARGE SCALE GENOMIC DNA]</scope>
    <source>
        <strain>FGSC A4 / ATCC 38163 / CBS 112.46 / NRRL 194 / M139</strain>
    </source>
</reference>
<reference key="2">
    <citation type="journal article" date="2009" name="Fungal Genet. Biol.">
        <title>The 2008 update of the Aspergillus nidulans genome annotation: a community effort.</title>
        <authorList>
            <person name="Wortman J.R."/>
            <person name="Gilsenan J.M."/>
            <person name="Joardar V."/>
            <person name="Deegan J."/>
            <person name="Clutterbuck J."/>
            <person name="Andersen M.R."/>
            <person name="Archer D."/>
            <person name="Bencina M."/>
            <person name="Braus G."/>
            <person name="Coutinho P."/>
            <person name="von Dohren H."/>
            <person name="Doonan J."/>
            <person name="Driessen A.J."/>
            <person name="Durek P."/>
            <person name="Espeso E."/>
            <person name="Fekete E."/>
            <person name="Flipphi M."/>
            <person name="Estrada C.G."/>
            <person name="Geysens S."/>
            <person name="Goldman G."/>
            <person name="de Groot P.W."/>
            <person name="Hansen K."/>
            <person name="Harris S.D."/>
            <person name="Heinekamp T."/>
            <person name="Helmstaedt K."/>
            <person name="Henrissat B."/>
            <person name="Hofmann G."/>
            <person name="Homan T."/>
            <person name="Horio T."/>
            <person name="Horiuchi H."/>
            <person name="James S."/>
            <person name="Jones M."/>
            <person name="Karaffa L."/>
            <person name="Karanyi Z."/>
            <person name="Kato M."/>
            <person name="Keller N."/>
            <person name="Kelly D.E."/>
            <person name="Kiel J.A."/>
            <person name="Kim J.M."/>
            <person name="van der Klei I.J."/>
            <person name="Klis F.M."/>
            <person name="Kovalchuk A."/>
            <person name="Krasevec N."/>
            <person name="Kubicek C.P."/>
            <person name="Liu B."/>
            <person name="Maccabe A."/>
            <person name="Meyer V."/>
            <person name="Mirabito P."/>
            <person name="Miskei M."/>
            <person name="Mos M."/>
            <person name="Mullins J."/>
            <person name="Nelson D.R."/>
            <person name="Nielsen J."/>
            <person name="Oakley B.R."/>
            <person name="Osmani S.A."/>
            <person name="Pakula T."/>
            <person name="Paszewski A."/>
            <person name="Paulsen I."/>
            <person name="Pilsyk S."/>
            <person name="Pocsi I."/>
            <person name="Punt P.J."/>
            <person name="Ram A.F."/>
            <person name="Ren Q."/>
            <person name="Robellet X."/>
            <person name="Robson G."/>
            <person name="Seiboth B."/>
            <person name="van Solingen P."/>
            <person name="Specht T."/>
            <person name="Sun J."/>
            <person name="Taheri-Talesh N."/>
            <person name="Takeshita N."/>
            <person name="Ussery D."/>
            <person name="vanKuyk P.A."/>
            <person name="Visser H."/>
            <person name="van de Vondervoort P.J."/>
            <person name="de Vries R.P."/>
            <person name="Walton J."/>
            <person name="Xiang X."/>
            <person name="Xiong Y."/>
            <person name="Zeng A.P."/>
            <person name="Brandt B.W."/>
            <person name="Cornell M.J."/>
            <person name="van den Hondel C.A."/>
            <person name="Visser J."/>
            <person name="Oliver S.G."/>
            <person name="Turner G."/>
        </authorList>
    </citation>
    <scope>GENOME REANNOTATION</scope>
    <source>
        <strain>FGSC A4 / ATCC 38163 / CBS 112.46 / NRRL 194 / M139</strain>
    </source>
</reference>
<gene>
    <name type="primary">hir1</name>
    <name type="ORF">AN1286</name>
</gene>
<sequence>MDILYRPMLLSIYVCRASRTVLANIFVSFSGFLGERKAFEVYSCDVSPDGSRLVTAAGDGYVRIWSTEAICGAEDANKPKQLASMSNHSGTIHTVRFSPNGKYLASGADDKIVCIYTLDANPPSHAASFGSNEAPPVENWRTIRRLIGHDNDVQDLGWSCDSSILVSVGLDSKVVVWSGHTFEKLKTLSVHQSHVKGITFDPANKYFATASDDRTVRIFRFTSPAPNSTAHDQMNNFVLEQTITAPFQNSPLTAYFRRCSWSPDGLHIAAANAVNGPVSSVAIINRGGWDGDINLIGHEAPVEVCAFSPRLYSPQPIKKNQQDSHDHVAQAPVTVIACAGGDKSLSVWITSNPRPIVVAQELAAKSISDLAWSPDGSCLYATALDGTILAVRFEDGDLGYAMELEENEKSLTKFGTNRKGAGIAETTDGLLLEEKSKAGELKGVEGRMGALMGDGHATGDAVANGKPTPLPSTSNGVTPAAPSPSTDAQKSQPNGTAAPSASETEKPDPYQAKLERLKQRPTYTKDGKKRIAPLLVSGAGGAESSLPQARLMASVSSQVKADTPQSIVDLSKPFDGLPKGGLATLLFGNKRKLAQLEDEEDGHTEKRVALASQNGATPILTSAPEGLLPAQPQDPPTGQQPTPEFIRPAVVNPCMSVSQLRLAVPKVRTHIVRAIDSAGKPTEPPSTSGESNKSRVDVVFEARNPSGASLTGRAADREPVRLTLFRGEQPLWQDFLPRTVLLVTGNQNMWSAACEDGSVYIWTPAGRRLVSALVLEAQPVILECNGPWILSISAVGMCYVWNVEHLSSPHPPVSLQPVLDAAIHTLGAHPSAAPSITNARINSEGRIIIALSNGEGYAYSPSLYTWQRLSEAWWAVGSQYWNSTEAPVGNLQSASNTQQKDKDARAAVSAGIIPFLERNTTNETLLRGRAYFLQRLIKTLLSREGYESFESSVSIAHLENRLAGALSLGAKEEFRLYLSMYAKRIGAEGLRGKVEELLKGKHRDLQRVTVPYAKLLGVVDNESDANDAMEL</sequence>
<name>HIR1_EMENI</name>
<keyword id="KW-0156">Chromatin regulator</keyword>
<keyword id="KW-0539">Nucleus</keyword>
<keyword id="KW-1185">Reference proteome</keyword>
<keyword id="KW-0677">Repeat</keyword>
<keyword id="KW-0678">Repressor</keyword>
<keyword id="KW-0804">Transcription</keyword>
<keyword id="KW-0805">Transcription regulation</keyword>
<keyword id="KW-0853">WD repeat</keyword>
<accession>Q5BDU4</accession>
<accession>C8VSF2</accession>
<evidence type="ECO:0000250" key="1"/>
<evidence type="ECO:0000256" key="2">
    <source>
        <dbReference type="SAM" id="MobiDB-lite"/>
    </source>
</evidence>
<evidence type="ECO:0000305" key="3"/>
<protein>
    <recommendedName>
        <fullName>Protein hir1</fullName>
    </recommendedName>
</protein>
<comment type="function">
    <text evidence="1">Required for replication-independent chromatin assembly and for the periodic repression of histone gene transcription during the cell cycle.</text>
</comment>
<comment type="subcellular location">
    <subcellularLocation>
        <location evidence="1">Nucleus</location>
    </subcellularLocation>
</comment>
<comment type="similarity">
    <text evidence="3">Belongs to the WD repeat HIR1 family.</text>
</comment>
<comment type="sequence caution" evidence="3">
    <conflict type="erroneous gene model prediction">
        <sequence resource="EMBL-CDS" id="CBF87791"/>
    </conflict>
</comment>
<comment type="sequence caution" evidence="3">
    <conflict type="erroneous gene model prediction">
        <sequence resource="EMBL-CDS" id="EAA65879"/>
    </conflict>
</comment>
<proteinExistence type="inferred from homology"/>